<keyword id="KW-0472">Membrane</keyword>
<keyword id="KW-0496">Mitochondrion</keyword>
<keyword id="KW-0999">Mitochondrion inner membrane</keyword>
<keyword id="KW-0653">Protein transport</keyword>
<keyword id="KW-1185">Reference proteome</keyword>
<keyword id="KW-0809">Transit peptide</keyword>
<keyword id="KW-0811">Translocation</keyword>
<keyword id="KW-0812">Transmembrane</keyword>
<keyword id="KW-1133">Transmembrane helix</keyword>
<keyword id="KW-0813">Transport</keyword>
<reference key="1">
    <citation type="journal article" date="2005" name="Science">
        <title>The transcriptional landscape of the mammalian genome.</title>
        <authorList>
            <person name="Carninci P."/>
            <person name="Kasukawa T."/>
            <person name="Katayama S."/>
            <person name="Gough J."/>
            <person name="Frith M.C."/>
            <person name="Maeda N."/>
            <person name="Oyama R."/>
            <person name="Ravasi T."/>
            <person name="Lenhard B."/>
            <person name="Wells C."/>
            <person name="Kodzius R."/>
            <person name="Shimokawa K."/>
            <person name="Bajic V.B."/>
            <person name="Brenner S.E."/>
            <person name="Batalov S."/>
            <person name="Forrest A.R."/>
            <person name="Zavolan M."/>
            <person name="Davis M.J."/>
            <person name="Wilming L.G."/>
            <person name="Aidinis V."/>
            <person name="Allen J.E."/>
            <person name="Ambesi-Impiombato A."/>
            <person name="Apweiler R."/>
            <person name="Aturaliya R.N."/>
            <person name="Bailey T.L."/>
            <person name="Bansal M."/>
            <person name="Baxter L."/>
            <person name="Beisel K.W."/>
            <person name="Bersano T."/>
            <person name="Bono H."/>
            <person name="Chalk A.M."/>
            <person name="Chiu K.P."/>
            <person name="Choudhary V."/>
            <person name="Christoffels A."/>
            <person name="Clutterbuck D.R."/>
            <person name="Crowe M.L."/>
            <person name="Dalla E."/>
            <person name="Dalrymple B.P."/>
            <person name="de Bono B."/>
            <person name="Della Gatta G."/>
            <person name="di Bernardo D."/>
            <person name="Down T."/>
            <person name="Engstrom P."/>
            <person name="Fagiolini M."/>
            <person name="Faulkner G."/>
            <person name="Fletcher C.F."/>
            <person name="Fukushima T."/>
            <person name="Furuno M."/>
            <person name="Futaki S."/>
            <person name="Gariboldi M."/>
            <person name="Georgii-Hemming P."/>
            <person name="Gingeras T.R."/>
            <person name="Gojobori T."/>
            <person name="Green R.E."/>
            <person name="Gustincich S."/>
            <person name="Harbers M."/>
            <person name="Hayashi Y."/>
            <person name="Hensch T.K."/>
            <person name="Hirokawa N."/>
            <person name="Hill D."/>
            <person name="Huminiecki L."/>
            <person name="Iacono M."/>
            <person name="Ikeo K."/>
            <person name="Iwama A."/>
            <person name="Ishikawa T."/>
            <person name="Jakt M."/>
            <person name="Kanapin A."/>
            <person name="Katoh M."/>
            <person name="Kawasawa Y."/>
            <person name="Kelso J."/>
            <person name="Kitamura H."/>
            <person name="Kitano H."/>
            <person name="Kollias G."/>
            <person name="Krishnan S.P."/>
            <person name="Kruger A."/>
            <person name="Kummerfeld S.K."/>
            <person name="Kurochkin I.V."/>
            <person name="Lareau L.F."/>
            <person name="Lazarevic D."/>
            <person name="Lipovich L."/>
            <person name="Liu J."/>
            <person name="Liuni S."/>
            <person name="McWilliam S."/>
            <person name="Madan Babu M."/>
            <person name="Madera M."/>
            <person name="Marchionni L."/>
            <person name="Matsuda H."/>
            <person name="Matsuzawa S."/>
            <person name="Miki H."/>
            <person name="Mignone F."/>
            <person name="Miyake S."/>
            <person name="Morris K."/>
            <person name="Mottagui-Tabar S."/>
            <person name="Mulder N."/>
            <person name="Nakano N."/>
            <person name="Nakauchi H."/>
            <person name="Ng P."/>
            <person name="Nilsson R."/>
            <person name="Nishiguchi S."/>
            <person name="Nishikawa S."/>
            <person name="Nori F."/>
            <person name="Ohara O."/>
            <person name="Okazaki Y."/>
            <person name="Orlando V."/>
            <person name="Pang K.C."/>
            <person name="Pavan W.J."/>
            <person name="Pavesi G."/>
            <person name="Pesole G."/>
            <person name="Petrovsky N."/>
            <person name="Piazza S."/>
            <person name="Reed J."/>
            <person name="Reid J.F."/>
            <person name="Ring B.Z."/>
            <person name="Ringwald M."/>
            <person name="Rost B."/>
            <person name="Ruan Y."/>
            <person name="Salzberg S.L."/>
            <person name="Sandelin A."/>
            <person name="Schneider C."/>
            <person name="Schoenbach C."/>
            <person name="Sekiguchi K."/>
            <person name="Semple C.A."/>
            <person name="Seno S."/>
            <person name="Sessa L."/>
            <person name="Sheng Y."/>
            <person name="Shibata Y."/>
            <person name="Shimada H."/>
            <person name="Shimada K."/>
            <person name="Silva D."/>
            <person name="Sinclair B."/>
            <person name="Sperling S."/>
            <person name="Stupka E."/>
            <person name="Sugiura K."/>
            <person name="Sultana R."/>
            <person name="Takenaka Y."/>
            <person name="Taki K."/>
            <person name="Tammoja K."/>
            <person name="Tan S.L."/>
            <person name="Tang S."/>
            <person name="Taylor M.S."/>
            <person name="Tegner J."/>
            <person name="Teichmann S.A."/>
            <person name="Ueda H.R."/>
            <person name="van Nimwegen E."/>
            <person name="Verardo R."/>
            <person name="Wei C.L."/>
            <person name="Yagi K."/>
            <person name="Yamanishi H."/>
            <person name="Zabarovsky E."/>
            <person name="Zhu S."/>
            <person name="Zimmer A."/>
            <person name="Hide W."/>
            <person name="Bult C."/>
            <person name="Grimmond S.M."/>
            <person name="Teasdale R.D."/>
            <person name="Liu E.T."/>
            <person name="Brusic V."/>
            <person name="Quackenbush J."/>
            <person name="Wahlestedt C."/>
            <person name="Mattick J.S."/>
            <person name="Hume D.A."/>
            <person name="Kai C."/>
            <person name="Sasaki D."/>
            <person name="Tomaru Y."/>
            <person name="Fukuda S."/>
            <person name="Kanamori-Katayama M."/>
            <person name="Suzuki M."/>
            <person name="Aoki J."/>
            <person name="Arakawa T."/>
            <person name="Iida J."/>
            <person name="Imamura K."/>
            <person name="Itoh M."/>
            <person name="Kato T."/>
            <person name="Kawaji H."/>
            <person name="Kawagashira N."/>
            <person name="Kawashima T."/>
            <person name="Kojima M."/>
            <person name="Kondo S."/>
            <person name="Konno H."/>
            <person name="Nakano K."/>
            <person name="Ninomiya N."/>
            <person name="Nishio T."/>
            <person name="Okada M."/>
            <person name="Plessy C."/>
            <person name="Shibata K."/>
            <person name="Shiraki T."/>
            <person name="Suzuki S."/>
            <person name="Tagami M."/>
            <person name="Waki K."/>
            <person name="Watahiki A."/>
            <person name="Okamura-Oho Y."/>
            <person name="Suzuki H."/>
            <person name="Kawai J."/>
            <person name="Hayashizaki Y."/>
        </authorList>
    </citation>
    <scope>NUCLEOTIDE SEQUENCE [LARGE SCALE MRNA]</scope>
    <source>
        <strain>C57BL/6J</strain>
        <strain>NOD</strain>
        <tissue>Pituitary</tissue>
        <tissue>Skin</tissue>
        <tissue>Thymus</tissue>
    </source>
</reference>
<reference key="2">
    <citation type="journal article" date="2004" name="Genome Res.">
        <title>The status, quality, and expansion of the NIH full-length cDNA project: the Mammalian Gene Collection (MGC).</title>
        <authorList>
            <consortium name="The MGC Project Team"/>
        </authorList>
    </citation>
    <scope>NUCLEOTIDE SEQUENCE [LARGE SCALE MRNA]</scope>
    <source>
        <strain>C57BL/6J</strain>
        <tissue>Brain</tissue>
    </source>
</reference>
<reference key="3">
    <citation type="journal article" date="2010" name="Cell">
        <title>A tissue-specific atlas of mouse protein phosphorylation and expression.</title>
        <authorList>
            <person name="Huttlin E.L."/>
            <person name="Jedrychowski M.P."/>
            <person name="Elias J.E."/>
            <person name="Goswami T."/>
            <person name="Rad R."/>
            <person name="Beausoleil S.A."/>
            <person name="Villen J."/>
            <person name="Haas W."/>
            <person name="Sowa M.E."/>
            <person name="Gygi S.P."/>
        </authorList>
    </citation>
    <scope>IDENTIFICATION BY MASS SPECTROMETRY [LARGE SCALE ANALYSIS]</scope>
    <source>
        <tissue>Brain</tissue>
        <tissue>Brown adipose tissue</tissue>
        <tissue>Heart</tissue>
        <tissue>Kidney</tissue>
        <tissue>Liver</tissue>
        <tissue>Lung</tissue>
        <tissue>Pancreas</tissue>
        <tissue>Spleen</tissue>
        <tissue>Testis</tissue>
    </source>
</reference>
<accession>Q8BGX2</accession>
<protein>
    <recommendedName>
        <fullName>Mitochondrial import inner membrane translocase subunit Tim29</fullName>
        <shortName>TIM29</shortName>
    </recommendedName>
</protein>
<evidence type="ECO:0000250" key="1">
    <source>
        <dbReference type="UniProtKB" id="Q9BSF4"/>
    </source>
</evidence>
<evidence type="ECO:0000255" key="2"/>
<organism>
    <name type="scientific">Mus musculus</name>
    <name type="common">Mouse</name>
    <dbReference type="NCBI Taxonomy" id="10090"/>
    <lineage>
        <taxon>Eukaryota</taxon>
        <taxon>Metazoa</taxon>
        <taxon>Chordata</taxon>
        <taxon>Craniata</taxon>
        <taxon>Vertebrata</taxon>
        <taxon>Euteleostomi</taxon>
        <taxon>Mammalia</taxon>
        <taxon>Eutheria</taxon>
        <taxon>Euarchontoglires</taxon>
        <taxon>Glires</taxon>
        <taxon>Rodentia</taxon>
        <taxon>Myomorpha</taxon>
        <taxon>Muroidea</taxon>
        <taxon>Muridae</taxon>
        <taxon>Murinae</taxon>
        <taxon>Mus</taxon>
        <taxon>Mus</taxon>
    </lineage>
</organism>
<comment type="function">
    <text evidence="1">Component of the TIM22 complex, a complex that mediates the import and insertion of multi-pass transmembrane proteins into the mitochondrial inner membrane. The TIM22 complex forms a twin-pore translocase that uses the membrane potential as the external driving force. Required for the stability of the TIM22 complex and functions in the assembly of the TIMM22 protein into the TIM22 complex. May facilitate cooperation between TIM22 and TOM complexes by interacting with TOMM40.</text>
</comment>
<comment type="subunit">
    <text evidence="1">Component of the TIM22 complex, which core is composed of TIMM22, associated with TIMM10 (TIMM10A and/or TIMM10B), TIMM9, AGK and TIMM29. Interacts with TIMM10B; the interaction is direct. Interacts with TOMM40; linking the TIM22 complex to the TOM complex. Interacts with TIMM22 (when oxidized); the interaction is direct.</text>
</comment>
<comment type="subcellular location">
    <subcellularLocation>
        <location evidence="1">Mitochondrion inner membrane</location>
        <topology evidence="1">Single-pass membrane protein</topology>
        <orientation evidence="1">Intermembrane side</orientation>
    </subcellularLocation>
</comment>
<sequence>MVTAALKRFWSGGHGEAGGEAGGATTVAVKPGLWTRLSTWAGALLRDYAEACGDAAAAARARPGRAALYVGLLGGAAACCALAPSEAAFEEALLDASGSLLLLAPATRNRHSEAFLQRLLWLRGRGRLRHVNLGFCSLVYEAPFDAQASLYQARCRYLQPRWVDFPGRILDVGFVGRWWILQNRMHDCDINDDEFLHLPAHLRVVAPHQLHSEANERLFEEKYKPIILTDDQVDQALWEEQVLQKERKDRLALSEADSLVQSDVSR</sequence>
<gene>
    <name type="primary">Timm29</name>
</gene>
<feature type="transit peptide" description="Mitochondrion" evidence="2">
    <location>
        <begin position="1"/>
        <end position="37"/>
    </location>
</feature>
<feature type="chain" id="PRO_0000271007" description="Mitochondrial import inner membrane translocase subunit Tim29">
    <location>
        <begin position="38"/>
        <end position="266"/>
    </location>
</feature>
<feature type="topological domain" description="Mitochondrial matrix" evidence="1">
    <location>
        <begin position="38"/>
        <end position="65"/>
    </location>
</feature>
<feature type="transmembrane region" description="Helical" evidence="2">
    <location>
        <begin position="66"/>
        <end position="83"/>
    </location>
</feature>
<feature type="topological domain" description="Mitochondrial intermembrane" evidence="1">
    <location>
        <begin position="84"/>
        <end position="266"/>
    </location>
</feature>
<dbReference type="EMBL" id="AK028799">
    <property type="protein sequence ID" value="BAC26126.1"/>
    <property type="molecule type" value="mRNA"/>
</dbReference>
<dbReference type="EMBL" id="AK030602">
    <property type="protein sequence ID" value="BAC27040.1"/>
    <property type="molecule type" value="mRNA"/>
</dbReference>
<dbReference type="EMBL" id="AK088045">
    <property type="protein sequence ID" value="BAC40114.1"/>
    <property type="molecule type" value="mRNA"/>
</dbReference>
<dbReference type="EMBL" id="BC057071">
    <property type="protein sequence ID" value="AAH57071.1"/>
    <property type="molecule type" value="mRNA"/>
</dbReference>
<dbReference type="CCDS" id="CCDS22908.1"/>
<dbReference type="RefSeq" id="NP_848734.1">
    <property type="nucleotide sequence ID" value="NM_178619.4"/>
</dbReference>
<dbReference type="SMR" id="Q8BGX2"/>
<dbReference type="BioGRID" id="213670">
    <property type="interactions" value="1"/>
</dbReference>
<dbReference type="FunCoup" id="Q8BGX2">
    <property type="interactions" value="1060"/>
</dbReference>
<dbReference type="STRING" id="10090.ENSMUSP00000058283"/>
<dbReference type="iPTMnet" id="Q8BGX2"/>
<dbReference type="PhosphoSitePlus" id="Q8BGX2"/>
<dbReference type="SwissPalm" id="Q8BGX2"/>
<dbReference type="jPOST" id="Q8BGX2"/>
<dbReference type="PaxDb" id="10090-ENSMUSP00000058283"/>
<dbReference type="PeptideAtlas" id="Q8BGX2"/>
<dbReference type="ProteomicsDB" id="259507"/>
<dbReference type="Pumba" id="Q8BGX2"/>
<dbReference type="Antibodypedia" id="51917">
    <property type="antibodies" value="37 antibodies from 14 providers"/>
</dbReference>
<dbReference type="DNASU" id="69773"/>
<dbReference type="Ensembl" id="ENSMUST00000062125.11">
    <property type="protein sequence ID" value="ENSMUSP00000058283.10"/>
    <property type="gene ID" value="ENSMUSG00000048429.11"/>
</dbReference>
<dbReference type="GeneID" id="69773"/>
<dbReference type="KEGG" id="mmu:69773"/>
<dbReference type="UCSC" id="uc009omb.2">
    <property type="organism name" value="mouse"/>
</dbReference>
<dbReference type="AGR" id="MGI:1917023"/>
<dbReference type="CTD" id="90580"/>
<dbReference type="MGI" id="MGI:1917023">
    <property type="gene designation" value="Timm29"/>
</dbReference>
<dbReference type="VEuPathDB" id="HostDB:ENSMUSG00000048429"/>
<dbReference type="eggNOG" id="KOG4545">
    <property type="taxonomic scope" value="Eukaryota"/>
</dbReference>
<dbReference type="GeneTree" id="ENSGT00390000018541"/>
<dbReference type="HOGENOM" id="CLU_102697_0_0_1"/>
<dbReference type="InParanoid" id="Q8BGX2"/>
<dbReference type="OMA" id="WRLKWKM"/>
<dbReference type="OrthoDB" id="5970620at2759"/>
<dbReference type="PhylomeDB" id="Q8BGX2"/>
<dbReference type="TreeFam" id="TF313304"/>
<dbReference type="BioGRID-ORCS" id="69773">
    <property type="hits" value="29 hits in 77 CRISPR screens"/>
</dbReference>
<dbReference type="CD-CODE" id="CE726F99">
    <property type="entry name" value="Postsynaptic density"/>
</dbReference>
<dbReference type="PRO" id="PR:Q8BGX2"/>
<dbReference type="Proteomes" id="UP000000589">
    <property type="component" value="Chromosome 9"/>
</dbReference>
<dbReference type="RNAct" id="Q8BGX2">
    <property type="molecule type" value="protein"/>
</dbReference>
<dbReference type="Bgee" id="ENSMUSG00000048429">
    <property type="expression patterns" value="Expressed in triceps brachii and 251 other cell types or tissues"/>
</dbReference>
<dbReference type="GO" id="GO:0005743">
    <property type="term" value="C:mitochondrial inner membrane"/>
    <property type="evidence" value="ECO:0000250"/>
    <property type="project" value="UniProtKB"/>
</dbReference>
<dbReference type="GO" id="GO:0005758">
    <property type="term" value="C:mitochondrial intermembrane space"/>
    <property type="evidence" value="ECO:0007669"/>
    <property type="project" value="Ensembl"/>
</dbReference>
<dbReference type="GO" id="GO:0042721">
    <property type="term" value="C:TIM22 mitochondrial import inner membrane insertion complex"/>
    <property type="evidence" value="ECO:0000250"/>
    <property type="project" value="UniProtKB"/>
</dbReference>
<dbReference type="GO" id="GO:0140318">
    <property type="term" value="F:protein transporter activity"/>
    <property type="evidence" value="ECO:0007669"/>
    <property type="project" value="Ensembl"/>
</dbReference>
<dbReference type="GO" id="GO:0045039">
    <property type="term" value="P:protein insertion into mitochondrial inner membrane"/>
    <property type="evidence" value="ECO:0000250"/>
    <property type="project" value="UniProtKB"/>
</dbReference>
<dbReference type="InterPro" id="IPR019322">
    <property type="entry name" value="TIMM29"/>
</dbReference>
<dbReference type="PANTHER" id="PTHR21435">
    <property type="entry name" value="MITOCHONDRIAL IMPORT INNER MEMBRANE TRANSLOCASE SUBUNIT TIM29"/>
    <property type="match status" value="1"/>
</dbReference>
<dbReference type="PANTHER" id="PTHR21435:SF1">
    <property type="entry name" value="MITOCHONDRIAL IMPORT INNER MEMBRANE TRANSLOCASE SUBUNIT TIM29"/>
    <property type="match status" value="1"/>
</dbReference>
<dbReference type="Pfam" id="PF10171">
    <property type="entry name" value="Tim29"/>
    <property type="match status" value="1"/>
</dbReference>
<proteinExistence type="evidence at protein level"/>
<name>TIM29_MOUSE</name>